<feature type="initiator methionine" description="Removed; by host" evidence="2">
    <location>
        <position position="1"/>
    </location>
</feature>
<feature type="chain" id="PRO_0000319078" description="Large envelope protein" evidence="2">
    <location>
        <begin position="2"/>
        <end position="400"/>
    </location>
</feature>
<feature type="topological domain" description="Intravirion; in internal conformation" evidence="2">
    <location>
        <begin position="2"/>
        <end position="253"/>
    </location>
</feature>
<feature type="topological domain" description="Virion surface; in external conformation" evidence="2">
    <location>
        <begin position="2"/>
        <end position="181"/>
    </location>
</feature>
<feature type="transmembrane region" description="Helical; Name=TM1; Note=In external conformation" evidence="2">
    <location>
        <begin position="182"/>
        <end position="202"/>
    </location>
</feature>
<feature type="topological domain" description="Intravirion; in external conformation" evidence="2">
    <location>
        <begin position="203"/>
        <end position="253"/>
    </location>
</feature>
<feature type="transmembrane region" description="Helical; Name=TM2" evidence="2">
    <location>
        <begin position="254"/>
        <end position="274"/>
    </location>
</feature>
<feature type="topological domain" description="Virion surface" evidence="2">
    <location>
        <begin position="275"/>
        <end position="348"/>
    </location>
</feature>
<feature type="transmembrane region" description="Helical" evidence="2">
    <location>
        <begin position="349"/>
        <end position="369"/>
    </location>
</feature>
<feature type="topological domain" description="Intravirion" evidence="2">
    <location>
        <begin position="370"/>
        <end position="375"/>
    </location>
</feature>
<feature type="transmembrane region" description="Helical; Name=TM3" evidence="2">
    <location>
        <begin position="376"/>
        <end position="398"/>
    </location>
</feature>
<feature type="topological domain" description="Virion surface" evidence="2">
    <location>
        <begin position="399"/>
        <end position="400"/>
    </location>
</feature>
<feature type="region of interest" description="Disordered" evidence="3">
    <location>
        <begin position="1"/>
        <end position="50"/>
    </location>
</feature>
<feature type="region of interest" description="Pre-S" evidence="2">
    <location>
        <begin position="2"/>
        <end position="174"/>
    </location>
</feature>
<feature type="region of interest" description="Pre-S1" evidence="2">
    <location>
        <begin position="2"/>
        <end position="119"/>
    </location>
</feature>
<feature type="region of interest" description="Disordered" evidence="3">
    <location>
        <begin position="84"/>
        <end position="116"/>
    </location>
</feature>
<feature type="region of interest" description="Pre-S2" evidence="2">
    <location>
        <begin position="120"/>
        <end position="174"/>
    </location>
</feature>
<feature type="compositionally biased region" description="Polar residues" evidence="3">
    <location>
        <begin position="96"/>
        <end position="106"/>
    </location>
</feature>
<feature type="lipid moiety-binding region" description="N-myristoyl glycine; by host" evidence="2">
    <location>
        <position position="2"/>
    </location>
</feature>
<feature type="glycosylation site" description="N-linked (GlcNAc...) asparagine; by host" evidence="2">
    <location>
        <position position="320"/>
    </location>
</feature>
<feature type="splice variant" id="VSP_031379" description="In isoform S." evidence="4">
    <location>
        <begin position="1"/>
        <end position="174"/>
    </location>
</feature>
<comment type="function">
    <text evidence="2">The large envelope protein exists in two topological conformations, one which is termed 'external' or Le-HBsAg and the other 'internal' or Li-HBsAg. In its external conformation the protein attaches the virus to cell receptors and thereby initiating infection. This interaction determines the species specificity and liver tropism. This attachment induces virion internalization predominantly through caveolin-mediated endocytosis. The large envelope protein also assures fusion between virion membrane and endosomal membrane. In its internal conformation the protein plays a role in virion morphogenesis and mediates the contact with the nucleocapsid like a matrix protein.</text>
</comment>
<comment type="function">
    <text evidence="2">The middle envelope protein plays an important role in the budding of the virion. It is involved in the induction of budding in a nucleocapsid independent way. In this process the majority of envelope proteins bud to form subviral lipoprotein particles of 22 nm of diameter that do not contain a nucleocapsid.</text>
</comment>
<comment type="subunit">
    <text evidence="1 2">Li-HBsAg interacts with capsid protein and with HDV Large delta antigen. Isoform M associates with host chaperone CANX through its pre-S2 N glycan. This association may be essential for M proper secretion. Interacts (via its myristoylated pre-S1 region) with the host SLC10A1/NTCP; this interaction is essential for viral entry (By similarity).</text>
</comment>
<comment type="subcellular location">
    <subcellularLocation>
        <location evidence="2">Virion membrane</location>
    </subcellularLocation>
</comment>
<comment type="alternative products">
    <event type="alternative splicing"/>
    <event type="alternative initiation"/>
    <isoform>
        <id>Q9QBF0-1</id>
        <name>L</name>
        <name>Large envelope protein</name>
        <name>LHB</name>
        <name>L-HBsAg</name>
        <sequence type="displayed"/>
    </isoform>
    <isoform>
        <id>Q9QBF0-2</id>
        <name>S</name>
        <name>Small envelope protein</name>
        <name>SHB</name>
        <name>S-HBsAg</name>
        <sequence type="described" ref="VSP_031379"/>
    </isoform>
</comment>
<comment type="domain">
    <text>The large envelope protein is synthesized with the pre-S region at the cytosolic side of the endoplasmic reticulum and, hence will be within the virion after budding. Therefore the pre-S region is not N-glycosylated. Later a post-translational translocation of N-terminal pre-S and TM1 domains occur in about 50% of proteins at the virion surface. These molecules change their topology by an unknown mechanism, resulting in exposure of pre-S region at virion surface.</text>
</comment>
<comment type="domain">
    <text evidence="2">The large envelope protein is synthesized with the pre-S region at the cytosolic side of the endoplasmic reticulum and, hence will be within the virion after budding. Therefore the pre-S region is not N-glycosylated. Later a post-translational translocation of N-terminal pre-S and TM1 domains occur in about 50% of proteins at the virion surface. These molecules change their topology by an unknown mechanism, resulting in exposure of pre-S region at virion surface. For isoform M in contrast, the pre-S2 region is translocated cotranslationally to the endoplasmic reticulum lumen and is N-glycosylated.</text>
</comment>
<comment type="PTM">
    <text evidence="2">Isoform M is N-terminally acetylated by host at a ratio of 90%, and N-glycosylated by host at the pre-S2 region.</text>
</comment>
<comment type="PTM">
    <text evidence="1 2">Myristoylated; this modification is essential for its interaction with the host protein SLC10A1/NTCP.</text>
</comment>
<comment type="biotechnology">
    <text>Systematic vaccination of individuals at risk of exposure to the virus has been the main method of controlling the morbidity and mortality associated with hepatitis B. The first hepatitis B vaccine was manufactured by the purification and inactivation of HBsAg obtained from the plasma of chronic hepatitis B virus carriers. The vaccine is now produced by recombinant DNA techniques and expression of the S isoform in yeast cells. The pre-S region do not seem to induce strong enough antigenic response.</text>
</comment>
<comment type="similarity">
    <text evidence="2">Belongs to the orthohepadnavirus major surface antigen family.</text>
</comment>
<gene>
    <name evidence="2" type="primary">S</name>
</gene>
<accession>Q9QBF0</accession>
<accession>Q9QBF3</accession>
<organismHost>
    <name type="scientific">Homo sapiens</name>
    <name type="common">Human</name>
    <dbReference type="NCBI Taxonomy" id="9606"/>
</organismHost>
<organismHost>
    <name type="scientific">Pan troglodytes</name>
    <name type="common">Chimpanzee</name>
    <dbReference type="NCBI Taxonomy" id="9598"/>
</organismHost>
<reference key="1">
    <citation type="journal article" date="1999" name="Yamagata Med. J.">
        <title>Sequence analysis of the entire genome of hepatitis B virus from a patient with fulminant hepatitis.</title>
        <authorList>
            <person name="Koseki T."/>
            <person name="Hongo S."/>
            <person name="Muraki Y."/>
            <person name="Sugawara K."/>
            <person name="Matsuzaki Y."/>
            <person name="Nakamura K."/>
        </authorList>
    </citation>
    <scope>NUCLEOTIDE SEQUENCE [GENOMIC DNA]</scope>
</reference>
<reference key="2">
    <citation type="journal article" date="1996" name="Intervirology">
        <title>Functions of the large hepatitis B virus surface protein in viral particle morphogenesis.</title>
        <authorList>
            <person name="Bruss V."/>
            <person name="Gerhardt E."/>
            <person name="Vieluf K."/>
            <person name="Wunderlich G."/>
        </authorList>
    </citation>
    <scope>REVIEW</scope>
</reference>
<reference key="3">
    <citation type="journal article" date="1998" name="Adv. Exp. Med. Biol.">
        <title>Role of glycan processing in hepatitis B virus envelope protein trafficking.</title>
        <authorList>
            <person name="Block T.M."/>
            <person name="Lu X."/>
            <person name="Mehta A."/>
            <person name="Park J."/>
            <person name="Blumberg B.S."/>
            <person name="Dwek R."/>
        </authorList>
    </citation>
    <scope>REVIEW</scope>
</reference>
<reference key="4">
    <citation type="journal article" date="2004" name="Virus Res.">
        <title>Envelopment of the hepatitis B virus nucleocapsid.</title>
        <authorList>
            <person name="Bruss V."/>
        </authorList>
    </citation>
    <scope>REVIEW</scope>
</reference>
<reference key="5">
    <citation type="journal article" date="2006" name="Cancer Sci.">
        <title>Hepatitis B virus pre-S mutants, endoplasmic reticulum stress and hepatocarcinogenesis.</title>
        <authorList>
            <person name="Wang H.C."/>
            <person name="Huang W."/>
            <person name="Lai M.D."/>
            <person name="Su I.J."/>
        </authorList>
    </citation>
    <scope>REVIEW</scope>
</reference>
<evidence type="ECO:0000250" key="1">
    <source>
        <dbReference type="UniProtKB" id="Q9PWW3"/>
    </source>
</evidence>
<evidence type="ECO:0000255" key="2">
    <source>
        <dbReference type="HAMAP-Rule" id="MF_04075"/>
    </source>
</evidence>
<evidence type="ECO:0000256" key="3">
    <source>
        <dbReference type="SAM" id="MobiDB-lite"/>
    </source>
</evidence>
<evidence type="ECO:0000305" key="4"/>
<sequence>MGGWSSKPRKGMGTNLSVPNPLGFFPDHQLDPAFKANSENPDWDLNPHKDNWPDAHKVGVGAFGPGFTPPHGGLLGWSPQAQGILTSVPAAPPPASTNRQSGRQPTPLSPPLRDTHPQAVQWNSTTFHQTLQDPRVRALYLPAGGSSSGTVSPAQNTVSAISSILSTTGDPVPNMENIASGLLGPLLVLQAGFFSLTKILTIPQSLDSWWTSLNFLGGTPVCLGQNSQSQISSHSPTCCPPICPGYRWMCLRRFIIFLCILLLCLIFLLVLLDYQGMLPVCPLIPGSSTTSTGPCKTCTTPAQGTSMFPSCCCTKPTDGNCTCIPIPSSWAFAKYLWEWASVRFSWLSLLVPFVQWFVGLSPTVWLSVIWMMWFWGPSLYNILSPFMPLLPIFLCLWVYM</sequence>
<proteinExistence type="evidence at protein level"/>
<name>HBSAG_HBVB7</name>
<protein>
    <recommendedName>
        <fullName evidence="2">Large envelope protein</fullName>
    </recommendedName>
    <alternativeName>
        <fullName evidence="2">L glycoprotein</fullName>
    </alternativeName>
    <alternativeName>
        <fullName evidence="2">L-HBsAg</fullName>
        <shortName evidence="2">LHB</shortName>
    </alternativeName>
    <alternativeName>
        <fullName evidence="2">Large S protein</fullName>
    </alternativeName>
    <alternativeName>
        <fullName evidence="2">Large surface protein</fullName>
    </alternativeName>
    <alternativeName>
        <fullName evidence="2">Major surface antigen</fullName>
    </alternativeName>
</protein>
<organism>
    <name type="scientific">Hepatitis B virus genotype B1 (isolate Japan/Yamagata-2/1998)</name>
    <name type="common">HBV-B</name>
    <dbReference type="NCBI Taxonomy" id="489464"/>
    <lineage>
        <taxon>Viruses</taxon>
        <taxon>Riboviria</taxon>
        <taxon>Pararnavirae</taxon>
        <taxon>Artverviricota</taxon>
        <taxon>Revtraviricetes</taxon>
        <taxon>Blubervirales</taxon>
        <taxon>Hepadnaviridae</taxon>
        <taxon>Orthohepadnavirus</taxon>
        <taxon>Hepatitis B virus</taxon>
    </lineage>
</organism>
<dbReference type="EMBL" id="AB010290">
    <property type="protein sequence ID" value="BAA88282.1"/>
    <property type="molecule type" value="Genomic_DNA"/>
</dbReference>
<dbReference type="EMBL" id="AB010290">
    <property type="protein sequence ID" value="BAA88278.1"/>
    <property type="molecule type" value="Genomic_DNA"/>
</dbReference>
<dbReference type="PIR" id="JQ2059">
    <property type="entry name" value="JQ2059"/>
</dbReference>
<dbReference type="PIR" id="JQ2060">
    <property type="entry name" value="JQ2060"/>
</dbReference>
<dbReference type="PIR" id="JQ2062">
    <property type="entry name" value="JQ2062"/>
</dbReference>
<dbReference type="SMR" id="Q9QBF0"/>
<dbReference type="GlyCosmos" id="Q9QBF0">
    <property type="glycosylation" value="1 site, No reported glycans"/>
</dbReference>
<dbReference type="Proteomes" id="UP000007918">
    <property type="component" value="Genome"/>
</dbReference>
<dbReference type="GO" id="GO:0016020">
    <property type="term" value="C:membrane"/>
    <property type="evidence" value="ECO:0007669"/>
    <property type="project" value="UniProtKB-UniRule"/>
</dbReference>
<dbReference type="GO" id="GO:0019031">
    <property type="term" value="C:viral envelope"/>
    <property type="evidence" value="ECO:0007669"/>
    <property type="project" value="UniProtKB-KW"/>
</dbReference>
<dbReference type="GO" id="GO:0055036">
    <property type="term" value="C:virion membrane"/>
    <property type="evidence" value="ECO:0007669"/>
    <property type="project" value="UniProtKB-SubCell"/>
</dbReference>
<dbReference type="GO" id="GO:0075513">
    <property type="term" value="P:caveolin-mediated endocytosis of virus by host cell"/>
    <property type="evidence" value="ECO:0007669"/>
    <property type="project" value="UniProtKB-KW"/>
</dbReference>
<dbReference type="GO" id="GO:0039654">
    <property type="term" value="P:fusion of virus membrane with host endosome membrane"/>
    <property type="evidence" value="ECO:0007669"/>
    <property type="project" value="UniProtKB-KW"/>
</dbReference>
<dbReference type="GO" id="GO:0019062">
    <property type="term" value="P:virion attachment to host cell"/>
    <property type="evidence" value="ECO:0007669"/>
    <property type="project" value="UniProtKB-UniRule"/>
</dbReference>
<dbReference type="HAMAP" id="MF_04075">
    <property type="entry name" value="HBV_HBSAG"/>
    <property type="match status" value="1"/>
</dbReference>
<dbReference type="InterPro" id="IPR000349">
    <property type="entry name" value="HBV_HBSAG"/>
</dbReference>
<dbReference type="Pfam" id="PF00695">
    <property type="entry name" value="vMSA"/>
    <property type="match status" value="1"/>
</dbReference>
<keyword id="KW-0007">Acetylation</keyword>
<keyword id="KW-0024">Alternative initiation</keyword>
<keyword id="KW-0025">Alternative splicing</keyword>
<keyword id="KW-1166">Caveolin-mediated endocytosis of virus by host</keyword>
<keyword id="KW-1170">Fusion of virus membrane with host endosomal membrane</keyword>
<keyword id="KW-1168">Fusion of virus membrane with host membrane</keyword>
<keyword id="KW-0325">Glycoprotein</keyword>
<keyword id="KW-0945">Host-virus interaction</keyword>
<keyword id="KW-0449">Lipoprotein</keyword>
<keyword id="KW-0472">Membrane</keyword>
<keyword id="KW-0519">Myristate</keyword>
<keyword id="KW-0812">Transmembrane</keyword>
<keyword id="KW-1133">Transmembrane helix</keyword>
<keyword id="KW-1161">Viral attachment to host cell</keyword>
<keyword id="KW-0261">Viral envelope protein</keyword>
<keyword id="KW-1162">Viral penetration into host cytoplasm</keyword>
<keyword id="KW-0946">Virion</keyword>
<keyword id="KW-1164">Virus endocytosis by host</keyword>
<keyword id="KW-1160">Virus entry into host cell</keyword>